<feature type="chain" id="PRO_0000431840" description="DNA ligase">
    <location>
        <begin position="1"/>
        <end position="562"/>
    </location>
</feature>
<feature type="active site" description="N6-AMP-lysine intermediate" evidence="1">
    <location>
        <position position="252"/>
    </location>
</feature>
<feature type="binding site" evidence="1">
    <location>
        <position position="250"/>
    </location>
    <ligand>
        <name>ATP</name>
        <dbReference type="ChEBI" id="CHEBI:30616"/>
    </ligand>
</feature>
<feature type="binding site" evidence="1">
    <location>
        <position position="257"/>
    </location>
    <ligand>
        <name>ATP</name>
        <dbReference type="ChEBI" id="CHEBI:30616"/>
    </ligand>
</feature>
<feature type="binding site" evidence="1">
    <location>
        <position position="272"/>
    </location>
    <ligand>
        <name>ATP</name>
        <dbReference type="ChEBI" id="CHEBI:30616"/>
    </ligand>
</feature>
<feature type="binding site" evidence="1">
    <location>
        <position position="302"/>
    </location>
    <ligand>
        <name>ATP</name>
        <dbReference type="ChEBI" id="CHEBI:30616"/>
    </ligand>
</feature>
<feature type="binding site" evidence="1">
    <location>
        <position position="342"/>
    </location>
    <ligand>
        <name>ATP</name>
        <dbReference type="ChEBI" id="CHEBI:30616"/>
    </ligand>
</feature>
<feature type="binding site" evidence="1">
    <location>
        <position position="417"/>
    </location>
    <ligand>
        <name>ATP</name>
        <dbReference type="ChEBI" id="CHEBI:30616"/>
    </ligand>
</feature>
<feature type="binding site" evidence="1">
    <location>
        <position position="423"/>
    </location>
    <ligand>
        <name>ATP</name>
        <dbReference type="ChEBI" id="CHEBI:30616"/>
    </ligand>
</feature>
<evidence type="ECO:0000255" key="1">
    <source>
        <dbReference type="HAMAP-Rule" id="MF_00407"/>
    </source>
</evidence>
<evidence type="ECO:0000269" key="2">
    <source>
    </source>
</evidence>
<evidence type="ECO:0000303" key="3">
    <source>
    </source>
</evidence>
<evidence type="ECO:0000305" key="4"/>
<evidence type="ECO:0000312" key="5">
    <source>
        <dbReference type="EMBL" id="ACJ17005.1"/>
    </source>
</evidence>
<gene>
    <name evidence="1" type="primary">lig</name>
    <name evidence="5" type="ordered locus">TON_1515</name>
</gene>
<dbReference type="EC" id="6.5.1.6" evidence="1 2"/>
<dbReference type="EMBL" id="DQ223722">
    <property type="protein sequence ID" value="ABC11973.1"/>
    <property type="molecule type" value="Genomic_DNA"/>
</dbReference>
<dbReference type="EMBL" id="CP000855">
    <property type="protein sequence ID" value="ACJ17005.1"/>
    <property type="molecule type" value="Genomic_DNA"/>
</dbReference>
<dbReference type="SMR" id="B6YTR4"/>
<dbReference type="STRING" id="523850.TON_1515"/>
<dbReference type="KEGG" id="ton:TON_1515"/>
<dbReference type="PATRIC" id="fig|523850.10.peg.1528"/>
<dbReference type="eggNOG" id="arCOG01347">
    <property type="taxonomic scope" value="Archaea"/>
</dbReference>
<dbReference type="HOGENOM" id="CLU_005138_6_0_2"/>
<dbReference type="BRENDA" id="6.5.1.6">
    <property type="organism ID" value="9350"/>
</dbReference>
<dbReference type="Proteomes" id="UP000002727">
    <property type="component" value="Chromosome"/>
</dbReference>
<dbReference type="GO" id="GO:0005524">
    <property type="term" value="F:ATP binding"/>
    <property type="evidence" value="ECO:0007669"/>
    <property type="project" value="UniProtKB-UniRule"/>
</dbReference>
<dbReference type="GO" id="GO:0003677">
    <property type="term" value="F:DNA binding"/>
    <property type="evidence" value="ECO:0007669"/>
    <property type="project" value="InterPro"/>
</dbReference>
<dbReference type="GO" id="GO:0003910">
    <property type="term" value="F:DNA ligase (ATP) activity"/>
    <property type="evidence" value="ECO:0007669"/>
    <property type="project" value="UniProtKB-UniRule"/>
</dbReference>
<dbReference type="GO" id="GO:0046872">
    <property type="term" value="F:metal ion binding"/>
    <property type="evidence" value="ECO:0007669"/>
    <property type="project" value="UniProtKB-KW"/>
</dbReference>
<dbReference type="GO" id="GO:0051301">
    <property type="term" value="P:cell division"/>
    <property type="evidence" value="ECO:0007669"/>
    <property type="project" value="UniProtKB-KW"/>
</dbReference>
<dbReference type="GO" id="GO:0071897">
    <property type="term" value="P:DNA biosynthetic process"/>
    <property type="evidence" value="ECO:0007669"/>
    <property type="project" value="InterPro"/>
</dbReference>
<dbReference type="GO" id="GO:0006310">
    <property type="term" value="P:DNA recombination"/>
    <property type="evidence" value="ECO:0007669"/>
    <property type="project" value="UniProtKB-UniRule"/>
</dbReference>
<dbReference type="GO" id="GO:0006281">
    <property type="term" value="P:DNA repair"/>
    <property type="evidence" value="ECO:0007669"/>
    <property type="project" value="UniProtKB-UniRule"/>
</dbReference>
<dbReference type="GO" id="GO:0006273">
    <property type="term" value="P:lagging strand elongation"/>
    <property type="evidence" value="ECO:0007669"/>
    <property type="project" value="TreeGrafter"/>
</dbReference>
<dbReference type="CDD" id="cd07901">
    <property type="entry name" value="Adenylation_DNA_ligase_Arch_LigB"/>
    <property type="match status" value="1"/>
</dbReference>
<dbReference type="CDD" id="cd07972">
    <property type="entry name" value="OBF_DNA_ligase_Arch_LigB"/>
    <property type="match status" value="1"/>
</dbReference>
<dbReference type="FunFam" id="1.10.3260.10:FF:000007">
    <property type="entry name" value="DNA ligase"/>
    <property type="match status" value="1"/>
</dbReference>
<dbReference type="FunFam" id="2.40.50.140:FF:000163">
    <property type="entry name" value="Probable DNA ligase"/>
    <property type="match status" value="1"/>
</dbReference>
<dbReference type="FunFam" id="3.30.470.30:FF:000012">
    <property type="entry name" value="Probable DNA ligase"/>
    <property type="match status" value="1"/>
</dbReference>
<dbReference type="Gene3D" id="1.10.3260.10">
    <property type="entry name" value="DNA ligase, ATP-dependent, N-terminal domain"/>
    <property type="match status" value="1"/>
</dbReference>
<dbReference type="Gene3D" id="3.30.470.30">
    <property type="entry name" value="DNA ligase/mRNA capping enzyme"/>
    <property type="match status" value="1"/>
</dbReference>
<dbReference type="Gene3D" id="2.40.50.140">
    <property type="entry name" value="Nucleic acid-binding proteins"/>
    <property type="match status" value="1"/>
</dbReference>
<dbReference type="HAMAP" id="MF_00407">
    <property type="entry name" value="DNA_ligase"/>
    <property type="match status" value="1"/>
</dbReference>
<dbReference type="InterPro" id="IPR050191">
    <property type="entry name" value="ATP-dep_DNA_ligase"/>
</dbReference>
<dbReference type="InterPro" id="IPR022865">
    <property type="entry name" value="DNA_ligae_ATP-dep_bac/arc"/>
</dbReference>
<dbReference type="InterPro" id="IPR000977">
    <property type="entry name" value="DNA_ligase_ATP-dep"/>
</dbReference>
<dbReference type="InterPro" id="IPR012309">
    <property type="entry name" value="DNA_ligase_ATP-dep_C"/>
</dbReference>
<dbReference type="InterPro" id="IPR012310">
    <property type="entry name" value="DNA_ligase_ATP-dep_cent"/>
</dbReference>
<dbReference type="InterPro" id="IPR016059">
    <property type="entry name" value="DNA_ligase_ATP-dep_CS"/>
</dbReference>
<dbReference type="InterPro" id="IPR012308">
    <property type="entry name" value="DNA_ligase_ATP-dep_N"/>
</dbReference>
<dbReference type="InterPro" id="IPR036599">
    <property type="entry name" value="DNA_ligase_N_sf"/>
</dbReference>
<dbReference type="InterPro" id="IPR012340">
    <property type="entry name" value="NA-bd_OB-fold"/>
</dbReference>
<dbReference type="NCBIfam" id="TIGR00574">
    <property type="entry name" value="dnl1"/>
    <property type="match status" value="1"/>
</dbReference>
<dbReference type="PANTHER" id="PTHR45674:SF7">
    <property type="entry name" value="DNA LIGASE"/>
    <property type="match status" value="1"/>
</dbReference>
<dbReference type="PANTHER" id="PTHR45674">
    <property type="entry name" value="DNA LIGASE 1/3 FAMILY MEMBER"/>
    <property type="match status" value="1"/>
</dbReference>
<dbReference type="Pfam" id="PF04679">
    <property type="entry name" value="DNA_ligase_A_C"/>
    <property type="match status" value="1"/>
</dbReference>
<dbReference type="Pfam" id="PF01068">
    <property type="entry name" value="DNA_ligase_A_M"/>
    <property type="match status" value="1"/>
</dbReference>
<dbReference type="Pfam" id="PF04675">
    <property type="entry name" value="DNA_ligase_A_N"/>
    <property type="match status" value="1"/>
</dbReference>
<dbReference type="SUPFAM" id="SSF117018">
    <property type="entry name" value="ATP-dependent DNA ligase DNA-binding domain"/>
    <property type="match status" value="1"/>
</dbReference>
<dbReference type="SUPFAM" id="SSF56091">
    <property type="entry name" value="DNA ligase/mRNA capping enzyme, catalytic domain"/>
    <property type="match status" value="1"/>
</dbReference>
<dbReference type="SUPFAM" id="SSF50249">
    <property type="entry name" value="Nucleic acid-binding proteins"/>
    <property type="match status" value="1"/>
</dbReference>
<dbReference type="PROSITE" id="PS00697">
    <property type="entry name" value="DNA_LIGASE_A1"/>
    <property type="match status" value="1"/>
</dbReference>
<dbReference type="PROSITE" id="PS00333">
    <property type="entry name" value="DNA_LIGASE_A2"/>
    <property type="match status" value="1"/>
</dbReference>
<dbReference type="PROSITE" id="PS50160">
    <property type="entry name" value="DNA_LIGASE_A3"/>
    <property type="match status" value="1"/>
</dbReference>
<protein>
    <recommendedName>
        <fullName evidence="1 3">DNA ligase</fullName>
        <ecNumber evidence="1 2">6.5.1.6</ecNumber>
    </recommendedName>
    <alternativeName>
        <fullName evidence="1 4">Polydeoxyribonucleotide synthase [ATP/NAD(+)]</fullName>
    </alternativeName>
    <alternativeName>
        <fullName evidence="3">TNA1_lig</fullName>
    </alternativeName>
</protein>
<reference key="1">
    <citation type="journal article" date="2006" name="Biotechnol. Lett.">
        <title>Cloning, expression, and characterization of a DNA ligase from a hyperthermophilic archaeon Thermococcus sp.</title>
        <authorList>
            <person name="Kim Y.J."/>
            <person name="Lee H.S."/>
            <person name="Bae S.S."/>
            <person name="Jeon J.H."/>
            <person name="Yang S.H."/>
            <person name="Lim J.K."/>
            <person name="Kang S.G."/>
            <person name="Kwon S.T."/>
            <person name="Lee J.H."/>
        </authorList>
    </citation>
    <scope>NUCLEOTIDE SEQUENCE [GENOMIC DNA]</scope>
    <scope>FUNCTION</scope>
    <scope>CATALYTIC ACTIVITY</scope>
    <scope>COFACTOR</scope>
    <scope>BIOPHYSICOCHEMICAL PROPERTIES</scope>
    <source>
        <strain>NA1</strain>
    </source>
</reference>
<reference key="2">
    <citation type="journal article" date="2008" name="J. Bacteriol.">
        <title>The complete genome sequence of Thermococcus onnurineus NA1 reveals a mixed heterotrophic and carboxydotrophic metabolism.</title>
        <authorList>
            <person name="Lee H.S."/>
            <person name="Kang S.G."/>
            <person name="Bae S.S."/>
            <person name="Lim J.K."/>
            <person name="Cho Y."/>
            <person name="Kim Y.J."/>
            <person name="Jeon J.H."/>
            <person name="Cha S.-S."/>
            <person name="Kwon K.K."/>
            <person name="Kim H.-T."/>
            <person name="Park C.-J."/>
            <person name="Lee H.-W."/>
            <person name="Kim S.I."/>
            <person name="Chun J."/>
            <person name="Colwell R.R."/>
            <person name="Kim S.-J."/>
            <person name="Lee J.-H."/>
        </authorList>
    </citation>
    <scope>NUCLEOTIDE SEQUENCE [LARGE SCALE GENOMIC DNA]</scope>
    <source>
        <strain>NA1</strain>
    </source>
</reference>
<organism>
    <name type="scientific">Thermococcus onnurineus (strain NA1)</name>
    <dbReference type="NCBI Taxonomy" id="523850"/>
    <lineage>
        <taxon>Archaea</taxon>
        <taxon>Methanobacteriati</taxon>
        <taxon>Methanobacteriota</taxon>
        <taxon>Thermococci</taxon>
        <taxon>Thermococcales</taxon>
        <taxon>Thermococcaceae</taxon>
        <taxon>Thermococcus</taxon>
    </lineage>
</organism>
<sequence>MGDMKYTELSDLYRRLEKTTLKTLKTKFVADFLKKTPDELLEVVPYLILGKVFPDWDERELGVGEKLLIKAVSMATGVQEREIENSVKDTGDLGESVALALKKKKQKSFFSQPLTIKRVYQTFIKIAEASGEGSQDRKLKYLANIFMDAQPEEGKYIARTVLGMMRTGVAEGILRDAIAEAFKVKAELVERAYMLTSDFGYVAKVAKLEGNDGLGKVHIQIGKPIRPMLAQNAASVKEALLEMGAEAAFEIKYDGARVQVHKDGDRVVIYSRRLENVTRSIPEVVDAIKASIKSEKAIVEGELVAVGEGGRPRPFQYVLRRFRRKYNIEEMIEKIPLELNLFDVLYVDGEPLIDTPFRERRAKLEEIVEEGEKLKLAQQLVTKKVEEAEEFYKKALELGHEGLMAKRLDSVYEPGNRGKKWLKIKPTMEDLDLVIIGAEWGEGRRAHLLGSFLVAAYDPHSGEFVPVGKVGSGFTDEDLVEFTKMLKPLIIGGEGKFVEIEPKVVIQVTYQEIQKSPKYRSGFALRFPRYVALREDKSPEEADTIERIAQLYEFQERFKAKK</sequence>
<comment type="function">
    <text evidence="2">DNA ligase that seals nicks in double-stranded DNA during DNA replication, DNA recombination and DNA repair. Can use both ATP and NAD(+), but NAD(+) may be a preferred nucleotide cofactor.</text>
</comment>
<comment type="catalytic activity">
    <reaction evidence="1 2">
        <text>ATP + (deoxyribonucleotide)n-3'-hydroxyl + 5'-phospho-(deoxyribonucleotide)m = (deoxyribonucleotide)n+m + AMP + diphosphate.</text>
        <dbReference type="EC" id="6.5.1.6"/>
    </reaction>
</comment>
<comment type="catalytic activity">
    <reaction evidence="1 2">
        <text>NAD(+) + (deoxyribonucleotide)n-3'-hydroxyl + 5'-phospho-(deoxyribonucleotide)m = (deoxyribonucleotide)n+m + AMP + beta-nicotinamide D-nucleotide.</text>
        <dbReference type="EC" id="6.5.1.6"/>
    </reaction>
</comment>
<comment type="cofactor">
    <cofactor evidence="2">
        <name>Mg(2+)</name>
        <dbReference type="ChEBI" id="CHEBI:18420"/>
    </cofactor>
    <cofactor evidence="2">
        <name>Zn(2+)</name>
        <dbReference type="ChEBI" id="CHEBI:29105"/>
    </cofactor>
    <text evidence="2">Not stimulated by Ca(2+), Mn(2+) and Ni(2+).</text>
</comment>
<comment type="biophysicochemical properties">
    <phDependence>
        <text evidence="2">Optimum pH is 7.5.</text>
    </phDependence>
    <temperatureDependence>
        <text evidence="2">Optimum temperature is 80 degrees Celsius.</text>
    </temperatureDependence>
</comment>
<comment type="similarity">
    <text evidence="1 4">Belongs to the ATP-dependent DNA ligase family.</text>
</comment>
<accession>B6YTR4</accession>
<accession>Q2Q452</accession>
<proteinExistence type="evidence at protein level"/>
<name>DNLI_THEON</name>
<keyword id="KW-0067">ATP-binding</keyword>
<keyword id="KW-0131">Cell cycle</keyword>
<keyword id="KW-0132">Cell division</keyword>
<keyword id="KW-0227">DNA damage</keyword>
<keyword id="KW-0233">DNA recombination</keyword>
<keyword id="KW-0234">DNA repair</keyword>
<keyword id="KW-0235">DNA replication</keyword>
<keyword id="KW-0436">Ligase</keyword>
<keyword id="KW-0460">Magnesium</keyword>
<keyword id="KW-0479">Metal-binding</keyword>
<keyword id="KW-0520">NAD</keyword>
<keyword id="KW-0547">Nucleotide-binding</keyword>
<keyword id="KW-0862">Zinc</keyword>